<dbReference type="EC" id="2.5.1.75" evidence="1"/>
<dbReference type="EMBL" id="AP009484">
    <property type="protein sequence ID" value="BAH17602.1"/>
    <property type="molecule type" value="Genomic_DNA"/>
</dbReference>
<dbReference type="RefSeq" id="WP_012656802.1">
    <property type="nucleotide sequence ID" value="NC_011999.1"/>
</dbReference>
<dbReference type="SMR" id="B9EBJ1"/>
<dbReference type="STRING" id="458233.MCCL_0895"/>
<dbReference type="KEGG" id="mcl:MCCL_0895"/>
<dbReference type="eggNOG" id="COG0324">
    <property type="taxonomic scope" value="Bacteria"/>
</dbReference>
<dbReference type="HOGENOM" id="CLU_032616_0_1_9"/>
<dbReference type="OrthoDB" id="9776390at2"/>
<dbReference type="Proteomes" id="UP000001383">
    <property type="component" value="Chromosome"/>
</dbReference>
<dbReference type="GO" id="GO:0005524">
    <property type="term" value="F:ATP binding"/>
    <property type="evidence" value="ECO:0007669"/>
    <property type="project" value="UniProtKB-UniRule"/>
</dbReference>
<dbReference type="GO" id="GO:0052381">
    <property type="term" value="F:tRNA dimethylallyltransferase activity"/>
    <property type="evidence" value="ECO:0007669"/>
    <property type="project" value="UniProtKB-UniRule"/>
</dbReference>
<dbReference type="GO" id="GO:0006400">
    <property type="term" value="P:tRNA modification"/>
    <property type="evidence" value="ECO:0007669"/>
    <property type="project" value="TreeGrafter"/>
</dbReference>
<dbReference type="Gene3D" id="1.10.20.140">
    <property type="match status" value="1"/>
</dbReference>
<dbReference type="Gene3D" id="3.40.50.300">
    <property type="entry name" value="P-loop containing nucleotide triphosphate hydrolases"/>
    <property type="match status" value="1"/>
</dbReference>
<dbReference type="HAMAP" id="MF_00185">
    <property type="entry name" value="IPP_trans"/>
    <property type="match status" value="1"/>
</dbReference>
<dbReference type="InterPro" id="IPR039657">
    <property type="entry name" value="Dimethylallyltransferase"/>
</dbReference>
<dbReference type="InterPro" id="IPR018022">
    <property type="entry name" value="IPT"/>
</dbReference>
<dbReference type="InterPro" id="IPR027417">
    <property type="entry name" value="P-loop_NTPase"/>
</dbReference>
<dbReference type="NCBIfam" id="TIGR00174">
    <property type="entry name" value="miaA"/>
    <property type="match status" value="1"/>
</dbReference>
<dbReference type="PANTHER" id="PTHR11088">
    <property type="entry name" value="TRNA DIMETHYLALLYLTRANSFERASE"/>
    <property type="match status" value="1"/>
</dbReference>
<dbReference type="PANTHER" id="PTHR11088:SF60">
    <property type="entry name" value="TRNA DIMETHYLALLYLTRANSFERASE"/>
    <property type="match status" value="1"/>
</dbReference>
<dbReference type="Pfam" id="PF01715">
    <property type="entry name" value="IPPT"/>
    <property type="match status" value="1"/>
</dbReference>
<dbReference type="SUPFAM" id="SSF52540">
    <property type="entry name" value="P-loop containing nucleoside triphosphate hydrolases"/>
    <property type="match status" value="2"/>
</dbReference>
<keyword id="KW-0067">ATP-binding</keyword>
<keyword id="KW-0460">Magnesium</keyword>
<keyword id="KW-0547">Nucleotide-binding</keyword>
<keyword id="KW-1185">Reference proteome</keyword>
<keyword id="KW-0808">Transferase</keyword>
<keyword id="KW-0819">tRNA processing</keyword>
<sequence>MNKIPLIVIVGPTAVGKTALSIEIAKAVNGEIISGDAIQVYRGMDIGSAKITQEEMEGIPHHLIDILNPDEAYSAAQFKVHAEKLIEDIYSRGKTPMIVGGTGLYIQSVLYEYEFVEEDQALKKELMDHYESLDKETLYRLLTEKDTKAASQIHINNRQRVLRALTYYEMHHKSITDQKKSHTLSSKYDTYIIGLNMPRPTLYDRINRRVLLMVEQGLVQEVETLISKGYRQSQSMTAIGYKEMIPYIDGEVSLNQAIENLQQNSRNFAKRQLTWFNNQMTIEWFDTSELTIESIVEQIAANIPRDDNDEFS</sequence>
<protein>
    <recommendedName>
        <fullName evidence="1">tRNA dimethylallyltransferase</fullName>
        <ecNumber evidence="1">2.5.1.75</ecNumber>
    </recommendedName>
    <alternativeName>
        <fullName evidence="1">Dimethylallyl diphosphate:tRNA dimethylallyltransferase</fullName>
        <shortName evidence="1">DMAPP:tRNA dimethylallyltransferase</shortName>
        <shortName evidence="1">DMATase</shortName>
    </alternativeName>
    <alternativeName>
        <fullName evidence="1">Isopentenyl-diphosphate:tRNA isopentenyltransferase</fullName>
        <shortName evidence="1">IPP transferase</shortName>
        <shortName evidence="1">IPPT</shortName>
        <shortName evidence="1">IPTase</shortName>
    </alternativeName>
</protein>
<evidence type="ECO:0000255" key="1">
    <source>
        <dbReference type="HAMAP-Rule" id="MF_00185"/>
    </source>
</evidence>
<reference key="1">
    <citation type="journal article" date="2009" name="J. Bacteriol.">
        <title>Complete genome sequence of Macrococcus caseolyticus strain JCSCS5402, reflecting the ancestral genome of the human-pathogenic staphylococci.</title>
        <authorList>
            <person name="Baba T."/>
            <person name="Kuwahara-Arai K."/>
            <person name="Uchiyama I."/>
            <person name="Takeuchi F."/>
            <person name="Ito T."/>
            <person name="Hiramatsu K."/>
        </authorList>
    </citation>
    <scope>NUCLEOTIDE SEQUENCE [LARGE SCALE GENOMIC DNA]</scope>
    <source>
        <strain>JCSC5402</strain>
    </source>
</reference>
<comment type="function">
    <text evidence="1">Catalyzes the transfer of a dimethylallyl group onto the adenine at position 37 in tRNAs that read codons beginning with uridine, leading to the formation of N6-(dimethylallyl)adenosine (i(6)A).</text>
</comment>
<comment type="catalytic activity">
    <reaction evidence="1">
        <text>adenosine(37) in tRNA + dimethylallyl diphosphate = N(6)-dimethylallyladenosine(37) in tRNA + diphosphate</text>
        <dbReference type="Rhea" id="RHEA:26482"/>
        <dbReference type="Rhea" id="RHEA-COMP:10162"/>
        <dbReference type="Rhea" id="RHEA-COMP:10375"/>
        <dbReference type="ChEBI" id="CHEBI:33019"/>
        <dbReference type="ChEBI" id="CHEBI:57623"/>
        <dbReference type="ChEBI" id="CHEBI:74411"/>
        <dbReference type="ChEBI" id="CHEBI:74415"/>
        <dbReference type="EC" id="2.5.1.75"/>
    </reaction>
</comment>
<comment type="cofactor">
    <cofactor evidence="1">
        <name>Mg(2+)</name>
        <dbReference type="ChEBI" id="CHEBI:18420"/>
    </cofactor>
</comment>
<comment type="subunit">
    <text evidence="1">Monomer.</text>
</comment>
<comment type="similarity">
    <text evidence="1">Belongs to the IPP transferase family.</text>
</comment>
<proteinExistence type="inferred from homology"/>
<accession>B9EBJ1</accession>
<gene>
    <name evidence="1" type="primary">miaA</name>
    <name type="ordered locus">MCCL_0895</name>
</gene>
<feature type="chain" id="PRO_1000203940" description="tRNA dimethylallyltransferase">
    <location>
        <begin position="1"/>
        <end position="312"/>
    </location>
</feature>
<feature type="region of interest" description="Interaction with substrate tRNA" evidence="1">
    <location>
        <begin position="159"/>
        <end position="163"/>
    </location>
</feature>
<feature type="binding site" evidence="1">
    <location>
        <begin position="11"/>
        <end position="18"/>
    </location>
    <ligand>
        <name>ATP</name>
        <dbReference type="ChEBI" id="CHEBI:30616"/>
    </ligand>
</feature>
<feature type="binding site" evidence="1">
    <location>
        <begin position="13"/>
        <end position="18"/>
    </location>
    <ligand>
        <name>substrate</name>
    </ligand>
</feature>
<feature type="site" description="Interaction with substrate tRNA" evidence="1">
    <location>
        <position position="102"/>
    </location>
</feature>
<name>MIAA_MACCJ</name>
<organism>
    <name type="scientific">Macrococcus caseolyticus (strain JCSC5402)</name>
    <name type="common">Macrococcoides caseolyticum</name>
    <dbReference type="NCBI Taxonomy" id="458233"/>
    <lineage>
        <taxon>Bacteria</taxon>
        <taxon>Bacillati</taxon>
        <taxon>Bacillota</taxon>
        <taxon>Bacilli</taxon>
        <taxon>Bacillales</taxon>
        <taxon>Staphylococcaceae</taxon>
        <taxon>Macrococcoides</taxon>
    </lineage>
</organism>